<name>COAX_CUPPJ</name>
<evidence type="ECO:0000255" key="1">
    <source>
        <dbReference type="HAMAP-Rule" id="MF_01274"/>
    </source>
</evidence>
<accession>Q477E8</accession>
<feature type="chain" id="PRO_0000270894" description="Type III pantothenate kinase">
    <location>
        <begin position="1"/>
        <end position="275"/>
    </location>
</feature>
<feature type="active site" description="Proton acceptor" evidence="1">
    <location>
        <position position="123"/>
    </location>
</feature>
<feature type="binding site" evidence="1">
    <location>
        <begin position="9"/>
        <end position="16"/>
    </location>
    <ligand>
        <name>ATP</name>
        <dbReference type="ChEBI" id="CHEBI:30616"/>
    </ligand>
</feature>
<feature type="binding site" evidence="1">
    <location>
        <position position="114"/>
    </location>
    <ligand>
        <name>substrate</name>
    </ligand>
</feature>
<feature type="binding site" evidence="1">
    <location>
        <begin position="121"/>
        <end position="124"/>
    </location>
    <ligand>
        <name>substrate</name>
    </ligand>
</feature>
<feature type="binding site" evidence="1">
    <location>
        <position position="147"/>
    </location>
    <ligand>
        <name>ATP</name>
        <dbReference type="ChEBI" id="CHEBI:30616"/>
    </ligand>
</feature>
<feature type="binding site" evidence="1">
    <location>
        <position position="209"/>
    </location>
    <ligand>
        <name>substrate</name>
    </ligand>
</feature>
<protein>
    <recommendedName>
        <fullName evidence="1">Type III pantothenate kinase</fullName>
        <ecNumber evidence="1">2.7.1.33</ecNumber>
    </recommendedName>
    <alternativeName>
        <fullName evidence="1">PanK-III</fullName>
    </alternativeName>
    <alternativeName>
        <fullName evidence="1">Pantothenic acid kinase</fullName>
    </alternativeName>
</protein>
<proteinExistence type="inferred from homology"/>
<dbReference type="EC" id="2.7.1.33" evidence="1"/>
<dbReference type="EMBL" id="CP000090">
    <property type="protein sequence ID" value="AAZ59485.1"/>
    <property type="molecule type" value="Genomic_DNA"/>
</dbReference>
<dbReference type="SMR" id="Q477E8"/>
<dbReference type="STRING" id="264198.Reut_A0103"/>
<dbReference type="KEGG" id="reu:Reut_A0103"/>
<dbReference type="eggNOG" id="COG1521">
    <property type="taxonomic scope" value="Bacteria"/>
</dbReference>
<dbReference type="HOGENOM" id="CLU_066627_0_0_4"/>
<dbReference type="OrthoDB" id="9781305at2"/>
<dbReference type="UniPathway" id="UPA00241">
    <property type="reaction ID" value="UER00352"/>
</dbReference>
<dbReference type="GO" id="GO:0005737">
    <property type="term" value="C:cytoplasm"/>
    <property type="evidence" value="ECO:0007669"/>
    <property type="project" value="UniProtKB-SubCell"/>
</dbReference>
<dbReference type="GO" id="GO:0005524">
    <property type="term" value="F:ATP binding"/>
    <property type="evidence" value="ECO:0007669"/>
    <property type="project" value="UniProtKB-UniRule"/>
</dbReference>
<dbReference type="GO" id="GO:0004594">
    <property type="term" value="F:pantothenate kinase activity"/>
    <property type="evidence" value="ECO:0007669"/>
    <property type="project" value="UniProtKB-UniRule"/>
</dbReference>
<dbReference type="GO" id="GO:0015937">
    <property type="term" value="P:coenzyme A biosynthetic process"/>
    <property type="evidence" value="ECO:0007669"/>
    <property type="project" value="UniProtKB-UniRule"/>
</dbReference>
<dbReference type="CDD" id="cd24015">
    <property type="entry name" value="ASKHA_NBD_PanK-III"/>
    <property type="match status" value="1"/>
</dbReference>
<dbReference type="Gene3D" id="3.30.420.40">
    <property type="match status" value="2"/>
</dbReference>
<dbReference type="HAMAP" id="MF_01274">
    <property type="entry name" value="Pantothen_kinase_3"/>
    <property type="match status" value="1"/>
</dbReference>
<dbReference type="InterPro" id="IPR043129">
    <property type="entry name" value="ATPase_NBD"/>
</dbReference>
<dbReference type="InterPro" id="IPR004619">
    <property type="entry name" value="Type_III_PanK"/>
</dbReference>
<dbReference type="NCBIfam" id="TIGR00671">
    <property type="entry name" value="baf"/>
    <property type="match status" value="1"/>
</dbReference>
<dbReference type="NCBIfam" id="NF009867">
    <property type="entry name" value="PRK13328.1-3"/>
    <property type="match status" value="1"/>
</dbReference>
<dbReference type="PANTHER" id="PTHR34265">
    <property type="entry name" value="TYPE III PANTOTHENATE KINASE"/>
    <property type="match status" value="1"/>
</dbReference>
<dbReference type="PANTHER" id="PTHR34265:SF1">
    <property type="entry name" value="TYPE III PANTOTHENATE KINASE"/>
    <property type="match status" value="1"/>
</dbReference>
<dbReference type="Pfam" id="PF03309">
    <property type="entry name" value="Pan_kinase"/>
    <property type="match status" value="1"/>
</dbReference>
<dbReference type="SUPFAM" id="SSF53067">
    <property type="entry name" value="Actin-like ATPase domain"/>
    <property type="match status" value="2"/>
</dbReference>
<sequence length="275" mass="28423">MSAPVLLIDIGNTRLKWAWCNAGEVAVQEPGRLPTPWQHSGAVTHTDDSAMNTLAAVLRNLRGEGPVPSVWITNVAGPVIAGQVDAALNAAFGDGASVQWVRSAAAHGSLVSGYREPTQLGVDRWVGSIGAHRWLPGETLLIVTAGTATTLDIVTAQPGGQGRFEGGLILPGLALMLAALARNTAQLPALDVEDTGTAAASRLPWADNTHDAIAAGCLAAQAGAIERTWRTLSERGPTRCLLSGGARHALAGALAVPFEMHDNLVLLGLHAMATA</sequence>
<reference key="1">
    <citation type="journal article" date="2010" name="PLoS ONE">
        <title>The complete multipartite genome sequence of Cupriavidus necator JMP134, a versatile pollutant degrader.</title>
        <authorList>
            <person name="Lykidis A."/>
            <person name="Perez-Pantoja D."/>
            <person name="Ledger T."/>
            <person name="Mavromatis K."/>
            <person name="Anderson I.J."/>
            <person name="Ivanova N.N."/>
            <person name="Hooper S.D."/>
            <person name="Lapidus A."/>
            <person name="Lucas S."/>
            <person name="Gonzalez B."/>
            <person name="Kyrpides N.C."/>
        </authorList>
    </citation>
    <scope>NUCLEOTIDE SEQUENCE [LARGE SCALE GENOMIC DNA]</scope>
    <source>
        <strain>JMP134 / LMG 1197</strain>
    </source>
</reference>
<comment type="function">
    <text evidence="1">Catalyzes the phosphorylation of pantothenate (Pan), the first step in CoA biosynthesis.</text>
</comment>
<comment type="catalytic activity">
    <reaction evidence="1">
        <text>(R)-pantothenate + ATP = (R)-4'-phosphopantothenate + ADP + H(+)</text>
        <dbReference type="Rhea" id="RHEA:16373"/>
        <dbReference type="ChEBI" id="CHEBI:10986"/>
        <dbReference type="ChEBI" id="CHEBI:15378"/>
        <dbReference type="ChEBI" id="CHEBI:29032"/>
        <dbReference type="ChEBI" id="CHEBI:30616"/>
        <dbReference type="ChEBI" id="CHEBI:456216"/>
        <dbReference type="EC" id="2.7.1.33"/>
    </reaction>
</comment>
<comment type="cofactor">
    <cofactor evidence="1">
        <name>NH4(+)</name>
        <dbReference type="ChEBI" id="CHEBI:28938"/>
    </cofactor>
    <cofactor evidence="1">
        <name>K(+)</name>
        <dbReference type="ChEBI" id="CHEBI:29103"/>
    </cofactor>
    <text evidence="1">A monovalent cation. Ammonium or potassium.</text>
</comment>
<comment type="pathway">
    <text evidence="1">Cofactor biosynthesis; coenzyme A biosynthesis; CoA from (R)-pantothenate: step 1/5.</text>
</comment>
<comment type="subunit">
    <text evidence="1">Homodimer.</text>
</comment>
<comment type="subcellular location">
    <subcellularLocation>
        <location evidence="1">Cytoplasm</location>
    </subcellularLocation>
</comment>
<comment type="similarity">
    <text evidence="1">Belongs to the type III pantothenate kinase family.</text>
</comment>
<organism>
    <name type="scientific">Cupriavidus pinatubonensis (strain JMP 134 / LMG 1197)</name>
    <name type="common">Cupriavidus necator (strain JMP 134)</name>
    <dbReference type="NCBI Taxonomy" id="264198"/>
    <lineage>
        <taxon>Bacteria</taxon>
        <taxon>Pseudomonadati</taxon>
        <taxon>Pseudomonadota</taxon>
        <taxon>Betaproteobacteria</taxon>
        <taxon>Burkholderiales</taxon>
        <taxon>Burkholderiaceae</taxon>
        <taxon>Cupriavidus</taxon>
    </lineage>
</organism>
<gene>
    <name evidence="1" type="primary">coaX</name>
    <name type="ordered locus">Reut_A0103</name>
</gene>
<keyword id="KW-0067">ATP-binding</keyword>
<keyword id="KW-0173">Coenzyme A biosynthesis</keyword>
<keyword id="KW-0963">Cytoplasm</keyword>
<keyword id="KW-0418">Kinase</keyword>
<keyword id="KW-0547">Nucleotide-binding</keyword>
<keyword id="KW-0630">Potassium</keyword>
<keyword id="KW-0808">Transferase</keyword>